<sequence>MYKNQLQELAQRSCFSLPSYTCTREGPDHAPRFKASVNFNGEIFESPTYCSTLRQAEHSAAEVALSALSSKGPSKSLTARVLDETGIYKNLLQETAHRAGLDLPVYTSVRSGPGHIPTFSCTVELAGMSFNGESAKTKKQAEKNAAIAAWFSLRKMPRLDPLRGEEKEQEIVARVLSRFRPKEVKRREPNQSRRRTVIRTIRQNTTTTTTTTGDLLCEKLRSINLYTNEASSSSPPPQRFWPSRTNLTQEQSKVKSLLEKCQEYAEKKQSLDDPKPEMRIKTSSPSPLSSSVERNCYSKLLPFPSFVLNHQKLAPAVHIRSVIPVCSAPPPKPNPNPNSSPFITRELGNGSQEKKSLPN</sequence>
<protein>
    <recommendedName>
        <fullName>Double-stranded RNA-binding protein 3</fullName>
    </recommendedName>
    <alternativeName>
        <fullName>dsRNA-binding protein 3</fullName>
        <shortName>AtDRB3</shortName>
    </alternativeName>
</protein>
<name>DRB3_ARATH</name>
<dbReference type="EMBL" id="BT012284">
    <property type="protein sequence ID" value="AAS76771.1"/>
    <property type="molecule type" value="mRNA"/>
</dbReference>
<dbReference type="EMBL" id="AP000602">
    <property type="protein sequence ID" value="BAB01188.1"/>
    <property type="molecule type" value="Genomic_DNA"/>
</dbReference>
<dbReference type="EMBL" id="CP002686">
    <property type="protein sequence ID" value="AEE77245.1"/>
    <property type="molecule type" value="Genomic_DNA"/>
</dbReference>
<dbReference type="EMBL" id="CP002686">
    <property type="protein sequence ID" value="AEE77246.1"/>
    <property type="molecule type" value="Genomic_DNA"/>
</dbReference>
<dbReference type="EMBL" id="AK222128">
    <property type="protein sequence ID" value="BAD95129.1"/>
    <property type="molecule type" value="mRNA"/>
</dbReference>
<dbReference type="RefSeq" id="NP_001030779.2">
    <property type="nucleotide sequence ID" value="NM_001035702.3"/>
</dbReference>
<dbReference type="RefSeq" id="NP_189329.3">
    <property type="nucleotide sequence ID" value="NM_113606.5"/>
</dbReference>
<dbReference type="SMR" id="Q9LJF5"/>
<dbReference type="FunCoup" id="Q9LJF5">
    <property type="interactions" value="29"/>
</dbReference>
<dbReference type="IntAct" id="Q9LJF5">
    <property type="interactions" value="2"/>
</dbReference>
<dbReference type="MINT" id="Q9LJF5"/>
<dbReference type="STRING" id="3702.Q9LJF5"/>
<dbReference type="PaxDb" id="3702-AT3G26932.1"/>
<dbReference type="ProteomicsDB" id="241259"/>
<dbReference type="EnsemblPlants" id="AT3G26932.1">
    <property type="protein sequence ID" value="AT3G26932.1"/>
    <property type="gene ID" value="AT3G26932"/>
</dbReference>
<dbReference type="EnsemblPlants" id="AT3G26932.2">
    <property type="protein sequence ID" value="AT3G26932.2"/>
    <property type="gene ID" value="AT3G26932"/>
</dbReference>
<dbReference type="GeneID" id="822310"/>
<dbReference type="Gramene" id="AT3G26932.1">
    <property type="protein sequence ID" value="AT3G26932.1"/>
    <property type="gene ID" value="AT3G26932"/>
</dbReference>
<dbReference type="Gramene" id="AT3G26932.2">
    <property type="protein sequence ID" value="AT3G26932.2"/>
    <property type="gene ID" value="AT3G26932"/>
</dbReference>
<dbReference type="KEGG" id="ath:AT3G26932"/>
<dbReference type="Araport" id="AT3G26932"/>
<dbReference type="TAIR" id="AT3G26932">
    <property type="gene designation" value="DRB3"/>
</dbReference>
<dbReference type="eggNOG" id="ENOG502QTBA">
    <property type="taxonomic scope" value="Eukaryota"/>
</dbReference>
<dbReference type="HOGENOM" id="CLU_038996_0_0_1"/>
<dbReference type="InParanoid" id="Q9LJF5"/>
<dbReference type="PhylomeDB" id="Q9LJF5"/>
<dbReference type="PRO" id="PR:Q9LJF5"/>
<dbReference type="Proteomes" id="UP000006548">
    <property type="component" value="Chromosome 3"/>
</dbReference>
<dbReference type="ExpressionAtlas" id="Q9LJF5">
    <property type="expression patterns" value="baseline and differential"/>
</dbReference>
<dbReference type="GO" id="GO:0003725">
    <property type="term" value="F:double-stranded RNA binding"/>
    <property type="evidence" value="ECO:0007669"/>
    <property type="project" value="InterPro"/>
</dbReference>
<dbReference type="CDD" id="cd19907">
    <property type="entry name" value="DSRM_AtDRB-like_rpt1"/>
    <property type="match status" value="1"/>
</dbReference>
<dbReference type="CDD" id="cd19908">
    <property type="entry name" value="DSRM_AtDRB-like_rpt2"/>
    <property type="match status" value="1"/>
</dbReference>
<dbReference type="FunFam" id="3.30.160.20:FF:000036">
    <property type="entry name" value="Double-stranded RNA-binding protein 2"/>
    <property type="match status" value="2"/>
</dbReference>
<dbReference type="Gene3D" id="3.30.160.20">
    <property type="match status" value="2"/>
</dbReference>
<dbReference type="InterPro" id="IPR044450">
    <property type="entry name" value="AtDRB-like_DSRM_1"/>
</dbReference>
<dbReference type="InterPro" id="IPR044451">
    <property type="entry name" value="AtDRB-like_DSRM_2"/>
</dbReference>
<dbReference type="InterPro" id="IPR014720">
    <property type="entry name" value="dsRBD_dom"/>
</dbReference>
<dbReference type="PANTHER" id="PTHR46031">
    <property type="match status" value="1"/>
</dbReference>
<dbReference type="PANTHER" id="PTHR46031:SF15">
    <property type="entry name" value="DOUBLE-STRANDED RNA-BINDING PROTEIN 3"/>
    <property type="match status" value="1"/>
</dbReference>
<dbReference type="Pfam" id="PF00035">
    <property type="entry name" value="dsrm"/>
    <property type="match status" value="2"/>
</dbReference>
<dbReference type="SMART" id="SM00358">
    <property type="entry name" value="DSRM"/>
    <property type="match status" value="2"/>
</dbReference>
<dbReference type="SUPFAM" id="SSF54768">
    <property type="entry name" value="dsRNA-binding domain-like"/>
    <property type="match status" value="2"/>
</dbReference>
<dbReference type="PROSITE" id="PS50137">
    <property type="entry name" value="DS_RBD"/>
    <property type="match status" value="2"/>
</dbReference>
<organism>
    <name type="scientific">Arabidopsis thaliana</name>
    <name type="common">Mouse-ear cress</name>
    <dbReference type="NCBI Taxonomy" id="3702"/>
    <lineage>
        <taxon>Eukaryota</taxon>
        <taxon>Viridiplantae</taxon>
        <taxon>Streptophyta</taxon>
        <taxon>Embryophyta</taxon>
        <taxon>Tracheophyta</taxon>
        <taxon>Spermatophyta</taxon>
        <taxon>Magnoliopsida</taxon>
        <taxon>eudicotyledons</taxon>
        <taxon>Gunneridae</taxon>
        <taxon>Pentapetalae</taxon>
        <taxon>rosids</taxon>
        <taxon>malvids</taxon>
        <taxon>Brassicales</taxon>
        <taxon>Brassicaceae</taxon>
        <taxon>Camelineae</taxon>
        <taxon>Arabidopsis</taxon>
    </lineage>
</organism>
<reference key="1">
    <citation type="journal article" date="2000" name="DNA Res.">
        <title>Structural analysis of Arabidopsis thaliana chromosome 3. II. Sequence features of the 4,251,695 bp regions covered by 90 P1, TAC and BAC clones.</title>
        <authorList>
            <person name="Kaneko T."/>
            <person name="Katoh T."/>
            <person name="Sato S."/>
            <person name="Nakamura Y."/>
            <person name="Asamizu E."/>
            <person name="Tabata S."/>
        </authorList>
    </citation>
    <scope>NUCLEOTIDE SEQUENCE [LARGE SCALE GENOMIC DNA]</scope>
    <source>
        <strain>cv. Columbia</strain>
    </source>
</reference>
<reference key="2">
    <citation type="journal article" date="2017" name="Plant J.">
        <title>Araport11: a complete reannotation of the Arabidopsis thaliana reference genome.</title>
        <authorList>
            <person name="Cheng C.Y."/>
            <person name="Krishnakumar V."/>
            <person name="Chan A.P."/>
            <person name="Thibaud-Nissen F."/>
            <person name="Schobel S."/>
            <person name="Town C.D."/>
        </authorList>
    </citation>
    <scope>GENOME REANNOTATION</scope>
    <source>
        <strain>cv. Columbia</strain>
    </source>
</reference>
<reference key="3">
    <citation type="submission" date="2005-03" db="EMBL/GenBank/DDBJ databases">
        <title>Large-scale analysis of RIKEN Arabidopsis full-length (RAFL) cDNAs.</title>
        <authorList>
            <person name="Totoki Y."/>
            <person name="Seki M."/>
            <person name="Ishida J."/>
            <person name="Nakajima M."/>
            <person name="Enju A."/>
            <person name="Kamiya A."/>
            <person name="Narusaka M."/>
            <person name="Shin-i T."/>
            <person name="Nakagawa M."/>
            <person name="Sakamoto N."/>
            <person name="Oishi K."/>
            <person name="Kohara Y."/>
            <person name="Kobayashi M."/>
            <person name="Toyoda A."/>
            <person name="Sakaki Y."/>
            <person name="Sakurai T."/>
            <person name="Iida K."/>
            <person name="Akiyama K."/>
            <person name="Satou M."/>
            <person name="Toyoda T."/>
            <person name="Konagaya A."/>
            <person name="Carninci P."/>
            <person name="Kawai J."/>
            <person name="Hayashizaki Y."/>
            <person name="Shinozaki K."/>
        </authorList>
    </citation>
    <scope>NUCLEOTIDE SEQUENCE [LARGE SCALE MRNA]</scope>
    <source>
        <strain>cv. Columbia</strain>
    </source>
</reference>
<reference key="4">
    <citation type="submission" date="2004-03" db="EMBL/GenBank/DDBJ databases">
        <title>Arabidopsis ORF clones.</title>
        <authorList>
            <person name="Cheuk R.F."/>
            <person name="Chen H."/>
            <person name="Kim C.J."/>
            <person name="Shinn P."/>
            <person name="Carninci P."/>
            <person name="Hayashizaki Y."/>
            <person name="Ishida J."/>
            <person name="Kamiya A."/>
            <person name="Kawai J."/>
            <person name="Narusaka M."/>
            <person name="Sakurai T."/>
            <person name="Satou M."/>
            <person name="Seki M."/>
            <person name="Shinozaki K."/>
            <person name="Ecker J.R."/>
        </authorList>
    </citation>
    <scope>NUCLEOTIDE SEQUENCE [LARGE SCALE MRNA]</scope>
    <source>
        <strain>cv. Columbia</strain>
    </source>
</reference>
<reference key="5">
    <citation type="journal article" date="2008" name="FEBS Lett.">
        <title>The roles of plant dsRNA-binding proteins in RNAi-like pathways.</title>
        <authorList>
            <person name="Curtin S.J."/>
            <person name="Watson J.M."/>
            <person name="Smith N.A."/>
            <person name="Eamens A.L."/>
            <person name="Blanchard C.L."/>
            <person name="Waterhouse P.M."/>
        </authorList>
    </citation>
    <scope>TISSUE SPECIFICITY</scope>
    <scope>DISRUPTION PHENOTYPE</scope>
</reference>
<keyword id="KW-1185">Reference proteome</keyword>
<keyword id="KW-0677">Repeat</keyword>
<keyword id="KW-0694">RNA-binding</keyword>
<feature type="chain" id="PRO_0000404654" description="Double-stranded RNA-binding protein 3">
    <location>
        <begin position="1"/>
        <end position="359"/>
    </location>
</feature>
<feature type="domain" description="DRBM 1" evidence="2">
    <location>
        <begin position="1"/>
        <end position="70"/>
    </location>
</feature>
<feature type="domain" description="DRBM 2" evidence="2">
    <location>
        <begin position="87"/>
        <end position="155"/>
    </location>
</feature>
<feature type="region of interest" description="Disordered" evidence="3">
    <location>
        <begin position="266"/>
        <end position="292"/>
    </location>
</feature>
<feature type="region of interest" description="Disordered" evidence="3">
    <location>
        <begin position="328"/>
        <end position="359"/>
    </location>
</feature>
<feature type="compositionally biased region" description="Basic and acidic residues" evidence="3">
    <location>
        <begin position="266"/>
        <end position="280"/>
    </location>
</feature>
<feature type="compositionally biased region" description="Pro residues" evidence="3">
    <location>
        <begin position="328"/>
        <end position="338"/>
    </location>
</feature>
<comment type="function">
    <text evidence="1">Binds double-stranded RNA.</text>
</comment>
<comment type="interaction">
    <interactant intactId="EBI-10815073">
        <id>Q9LJF5</id>
    </interactant>
    <interactant intactId="EBI-2352199">
        <id>Q9ZVD5</id>
        <label>AGO4</label>
    </interactant>
    <organismsDiffer>false</organismsDiffer>
    <experiments>2</experiments>
</comment>
<comment type="interaction">
    <interactant intactId="EBI-10815073">
        <id>Q9LJF5</id>
    </interactant>
    <interactant intactId="EBI-632737">
        <id>Q9LXW7</id>
        <label>DCL3</label>
    </interactant>
    <organismsDiffer>false</organismsDiffer>
    <experiments>2</experiments>
</comment>
<comment type="disruption phenotype">
    <text evidence="4">No visible phenotype.</text>
</comment>
<gene>
    <name type="primary">DRB3</name>
    <name type="ordered locus">At3g26932</name>
    <name type="ORF">MQP17.7</name>
</gene>
<accession>Q9LJF5</accession>
<accession>Q2V3S2</accession>
<proteinExistence type="evidence at protein level"/>
<evidence type="ECO:0000250" key="1"/>
<evidence type="ECO:0000255" key="2">
    <source>
        <dbReference type="PROSITE-ProRule" id="PRU00266"/>
    </source>
</evidence>
<evidence type="ECO:0000256" key="3">
    <source>
        <dbReference type="SAM" id="MobiDB-lite"/>
    </source>
</evidence>
<evidence type="ECO:0000269" key="4">
    <source>
    </source>
</evidence>